<comment type="function">
    <text evidence="2">With S4 and S5 plays an important role in translational accuracy.</text>
</comment>
<comment type="function">
    <text evidence="2">Interacts with and stabilizes bases of the 16S rRNA that are involved in tRNA selection in the A site and with the mRNA backbone. Located at the interface of the 30S and 50S subunits, it traverses the body of the 30S subunit contacting proteins on the other side and probably holding the rRNA structure together. The combined cluster of proteins S8, S12 and S17 appears to hold together the shoulder and platform of the 30S subunit.</text>
</comment>
<comment type="subunit">
    <text evidence="2">Part of the 30S ribosomal subunit. Contacts proteins S8 and S17. May interact with IF1 in the 30S initiation complex.</text>
</comment>
<comment type="similarity">
    <text evidence="2">Belongs to the universal ribosomal protein uS12 family.</text>
</comment>
<feature type="chain" id="PRO_0000238134" description="Small ribosomal subunit protein uS12">
    <location>
        <begin position="1"/>
        <end position="124"/>
    </location>
</feature>
<feature type="modified residue" description="3-methylthioaspartic acid" evidence="1">
    <location>
        <position position="89"/>
    </location>
</feature>
<dbReference type="EMBL" id="CP000232">
    <property type="protein sequence ID" value="ABC20747.1"/>
    <property type="molecule type" value="Genomic_DNA"/>
</dbReference>
<dbReference type="RefSeq" id="YP_431290.1">
    <property type="nucleotide sequence ID" value="NC_007644.1"/>
</dbReference>
<dbReference type="SMR" id="Q2RFP2"/>
<dbReference type="STRING" id="264732.Moth_2465"/>
<dbReference type="EnsemblBacteria" id="ABC20747">
    <property type="protein sequence ID" value="ABC20747"/>
    <property type="gene ID" value="Moth_2465"/>
</dbReference>
<dbReference type="KEGG" id="mta:Moth_2465"/>
<dbReference type="PATRIC" id="fig|264732.11.peg.2683"/>
<dbReference type="eggNOG" id="COG0048">
    <property type="taxonomic scope" value="Bacteria"/>
</dbReference>
<dbReference type="HOGENOM" id="CLU_104295_1_2_9"/>
<dbReference type="OrthoDB" id="9802366at2"/>
<dbReference type="GO" id="GO:0015935">
    <property type="term" value="C:small ribosomal subunit"/>
    <property type="evidence" value="ECO:0007669"/>
    <property type="project" value="InterPro"/>
</dbReference>
<dbReference type="GO" id="GO:0019843">
    <property type="term" value="F:rRNA binding"/>
    <property type="evidence" value="ECO:0007669"/>
    <property type="project" value="UniProtKB-UniRule"/>
</dbReference>
<dbReference type="GO" id="GO:0003735">
    <property type="term" value="F:structural constituent of ribosome"/>
    <property type="evidence" value="ECO:0007669"/>
    <property type="project" value="InterPro"/>
</dbReference>
<dbReference type="GO" id="GO:0000049">
    <property type="term" value="F:tRNA binding"/>
    <property type="evidence" value="ECO:0007669"/>
    <property type="project" value="UniProtKB-UniRule"/>
</dbReference>
<dbReference type="GO" id="GO:0006412">
    <property type="term" value="P:translation"/>
    <property type="evidence" value="ECO:0007669"/>
    <property type="project" value="UniProtKB-UniRule"/>
</dbReference>
<dbReference type="CDD" id="cd03368">
    <property type="entry name" value="Ribosomal_S12"/>
    <property type="match status" value="1"/>
</dbReference>
<dbReference type="FunFam" id="2.40.50.140:FF:000001">
    <property type="entry name" value="30S ribosomal protein S12"/>
    <property type="match status" value="1"/>
</dbReference>
<dbReference type="Gene3D" id="2.40.50.140">
    <property type="entry name" value="Nucleic acid-binding proteins"/>
    <property type="match status" value="1"/>
</dbReference>
<dbReference type="HAMAP" id="MF_00403_B">
    <property type="entry name" value="Ribosomal_uS12_B"/>
    <property type="match status" value="1"/>
</dbReference>
<dbReference type="InterPro" id="IPR012340">
    <property type="entry name" value="NA-bd_OB-fold"/>
</dbReference>
<dbReference type="InterPro" id="IPR006032">
    <property type="entry name" value="Ribosomal_uS12"/>
</dbReference>
<dbReference type="InterPro" id="IPR005679">
    <property type="entry name" value="Ribosomal_uS12_bac"/>
</dbReference>
<dbReference type="NCBIfam" id="TIGR00981">
    <property type="entry name" value="rpsL_bact"/>
    <property type="match status" value="1"/>
</dbReference>
<dbReference type="PANTHER" id="PTHR11652">
    <property type="entry name" value="30S RIBOSOMAL PROTEIN S12 FAMILY MEMBER"/>
    <property type="match status" value="1"/>
</dbReference>
<dbReference type="Pfam" id="PF00164">
    <property type="entry name" value="Ribosom_S12_S23"/>
    <property type="match status" value="1"/>
</dbReference>
<dbReference type="PIRSF" id="PIRSF002133">
    <property type="entry name" value="Ribosomal_S12/S23"/>
    <property type="match status" value="1"/>
</dbReference>
<dbReference type="PRINTS" id="PR01034">
    <property type="entry name" value="RIBOSOMALS12"/>
</dbReference>
<dbReference type="SUPFAM" id="SSF50249">
    <property type="entry name" value="Nucleic acid-binding proteins"/>
    <property type="match status" value="1"/>
</dbReference>
<dbReference type="PROSITE" id="PS00055">
    <property type="entry name" value="RIBOSOMAL_S12"/>
    <property type="match status" value="1"/>
</dbReference>
<sequence length="124" mass="13759">MPTIQQLVRQAREKVVRKSTAPALKESPQKRGVCTRVYTTTPKKPNSALRKVARVRLTNGIEVTAYIPGIGHNLQEHSVVLVRGGRVKDLPGVRYHIVRGTLDAAGVQNRNQGRSKYGAKRPKK</sequence>
<name>RS12_MOOTA</name>
<proteinExistence type="inferred from homology"/>
<reference key="1">
    <citation type="journal article" date="2008" name="Environ. Microbiol.">
        <title>The complete genome sequence of Moorella thermoacetica (f. Clostridium thermoaceticum).</title>
        <authorList>
            <person name="Pierce E."/>
            <person name="Xie G."/>
            <person name="Barabote R.D."/>
            <person name="Saunders E."/>
            <person name="Han C.S."/>
            <person name="Detter J.C."/>
            <person name="Richardson P."/>
            <person name="Brettin T.S."/>
            <person name="Das A."/>
            <person name="Ljungdahl L.G."/>
            <person name="Ragsdale S.W."/>
        </authorList>
    </citation>
    <scope>NUCLEOTIDE SEQUENCE [LARGE SCALE GENOMIC DNA]</scope>
    <source>
        <strain>ATCC 39073 / JCM 9320</strain>
    </source>
</reference>
<keyword id="KW-0488">Methylation</keyword>
<keyword id="KW-0687">Ribonucleoprotein</keyword>
<keyword id="KW-0689">Ribosomal protein</keyword>
<keyword id="KW-0694">RNA-binding</keyword>
<keyword id="KW-0699">rRNA-binding</keyword>
<keyword id="KW-0820">tRNA-binding</keyword>
<gene>
    <name evidence="2" type="primary">rpsL</name>
    <name type="ordered locus">Moth_2465</name>
</gene>
<organism>
    <name type="scientific">Moorella thermoacetica (strain ATCC 39073 / JCM 9320)</name>
    <dbReference type="NCBI Taxonomy" id="264732"/>
    <lineage>
        <taxon>Bacteria</taxon>
        <taxon>Bacillati</taxon>
        <taxon>Bacillota</taxon>
        <taxon>Clostridia</taxon>
        <taxon>Moorellales</taxon>
        <taxon>Moorellaceae</taxon>
        <taxon>Moorella</taxon>
    </lineage>
</organism>
<accession>Q2RFP2</accession>
<evidence type="ECO:0000250" key="1"/>
<evidence type="ECO:0000255" key="2">
    <source>
        <dbReference type="HAMAP-Rule" id="MF_00403"/>
    </source>
</evidence>
<evidence type="ECO:0000305" key="3"/>
<protein>
    <recommendedName>
        <fullName evidence="2">Small ribosomal subunit protein uS12</fullName>
    </recommendedName>
    <alternativeName>
        <fullName evidence="3">30S ribosomal protein S12</fullName>
    </alternativeName>
</protein>